<name>Y2256_LISMF</name>
<protein>
    <recommendedName>
        <fullName evidence="1">UPF0342 protein LMOf2365_2256</fullName>
    </recommendedName>
</protein>
<dbReference type="EMBL" id="AE017262">
    <property type="protein sequence ID" value="AAT05023.1"/>
    <property type="molecule type" value="Genomic_DNA"/>
</dbReference>
<dbReference type="RefSeq" id="WP_003723354.1">
    <property type="nucleotide sequence ID" value="NC_002973.6"/>
</dbReference>
<dbReference type="SMR" id="Q71XE2"/>
<dbReference type="KEGG" id="lmf:LMOf2365_2256"/>
<dbReference type="HOGENOM" id="CLU_140243_3_0_9"/>
<dbReference type="Gene3D" id="1.20.1500.10">
    <property type="entry name" value="YheA/YmcA-like"/>
    <property type="match status" value="1"/>
</dbReference>
<dbReference type="HAMAP" id="MF_01526">
    <property type="entry name" value="UPF0342"/>
    <property type="match status" value="1"/>
</dbReference>
<dbReference type="InterPro" id="IPR010368">
    <property type="entry name" value="Com_YlbF"/>
</dbReference>
<dbReference type="InterPro" id="IPR023378">
    <property type="entry name" value="YheA/YmcA-like_dom_sf"/>
</dbReference>
<dbReference type="NCBIfam" id="NF010210">
    <property type="entry name" value="PRK13676.1-2"/>
    <property type="match status" value="1"/>
</dbReference>
<dbReference type="Pfam" id="PF06133">
    <property type="entry name" value="Com_YlbF"/>
    <property type="match status" value="1"/>
</dbReference>
<dbReference type="SUPFAM" id="SSF158622">
    <property type="entry name" value="YheA/YmcA-like"/>
    <property type="match status" value="1"/>
</dbReference>
<reference key="1">
    <citation type="journal article" date="2004" name="Nucleic Acids Res.">
        <title>Whole genome comparisons of serotype 4b and 1/2a strains of the food-borne pathogen Listeria monocytogenes reveal new insights into the core genome components of this species.</title>
        <authorList>
            <person name="Nelson K.E."/>
            <person name="Fouts D.E."/>
            <person name="Mongodin E.F."/>
            <person name="Ravel J."/>
            <person name="DeBoy R.T."/>
            <person name="Kolonay J.F."/>
            <person name="Rasko D.A."/>
            <person name="Angiuoli S.V."/>
            <person name="Gill S.R."/>
            <person name="Paulsen I.T."/>
            <person name="Peterson J.D."/>
            <person name="White O."/>
            <person name="Nelson W.C."/>
            <person name="Nierman W.C."/>
            <person name="Beanan M.J."/>
            <person name="Brinkac L.M."/>
            <person name="Daugherty S.C."/>
            <person name="Dodson R.J."/>
            <person name="Durkin A.S."/>
            <person name="Madupu R."/>
            <person name="Haft D.H."/>
            <person name="Selengut J."/>
            <person name="Van Aken S.E."/>
            <person name="Khouri H.M."/>
            <person name="Fedorova N."/>
            <person name="Forberger H.A."/>
            <person name="Tran B."/>
            <person name="Kathariou S."/>
            <person name="Wonderling L.D."/>
            <person name="Uhlich G.A."/>
            <person name="Bayles D.O."/>
            <person name="Luchansky J.B."/>
            <person name="Fraser C.M."/>
        </authorList>
    </citation>
    <scope>NUCLEOTIDE SEQUENCE [LARGE SCALE GENOMIC DNA]</scope>
    <source>
        <strain>F2365</strain>
    </source>
</reference>
<comment type="similarity">
    <text evidence="1">Belongs to the UPF0342 family.</text>
</comment>
<sequence>MAVNIYDLAHDLDKGIRETPEFISLQDAYREVNENADAKAKFERFRDVQVTIQEKQMTGQEIDDETVDVAQQVAQEVQENELIVKLMEKEQAMSTIINDLNRIIMTPLQDLYNVAND</sequence>
<accession>Q71XE2</accession>
<feature type="chain" id="PRO_0000109980" description="UPF0342 protein LMOf2365_2256">
    <location>
        <begin position="1"/>
        <end position="117"/>
    </location>
</feature>
<proteinExistence type="inferred from homology"/>
<evidence type="ECO:0000255" key="1">
    <source>
        <dbReference type="HAMAP-Rule" id="MF_01526"/>
    </source>
</evidence>
<organism>
    <name type="scientific">Listeria monocytogenes serotype 4b (strain F2365)</name>
    <dbReference type="NCBI Taxonomy" id="265669"/>
    <lineage>
        <taxon>Bacteria</taxon>
        <taxon>Bacillati</taxon>
        <taxon>Bacillota</taxon>
        <taxon>Bacilli</taxon>
        <taxon>Bacillales</taxon>
        <taxon>Listeriaceae</taxon>
        <taxon>Listeria</taxon>
    </lineage>
</organism>
<gene>
    <name type="ordered locus">LMOf2365_2256</name>
</gene>